<dbReference type="EMBL" id="CP001096">
    <property type="protein sequence ID" value="ACF02675.1"/>
    <property type="molecule type" value="Genomic_DNA"/>
</dbReference>
<dbReference type="RefSeq" id="WP_012497078.1">
    <property type="nucleotide sequence ID" value="NC_011004.1"/>
</dbReference>
<dbReference type="SMR" id="B3QGJ8"/>
<dbReference type="KEGG" id="rpt:Rpal_4179"/>
<dbReference type="HOGENOM" id="CLU_049215_2_0_5"/>
<dbReference type="OrthoDB" id="9798772at2"/>
<dbReference type="Proteomes" id="UP000001725">
    <property type="component" value="Chromosome"/>
</dbReference>
<dbReference type="GO" id="GO:0005737">
    <property type="term" value="C:cytoplasm"/>
    <property type="evidence" value="ECO:0007669"/>
    <property type="project" value="UniProtKB-SubCell"/>
</dbReference>
<dbReference type="GO" id="GO:0016151">
    <property type="term" value="F:nickel cation binding"/>
    <property type="evidence" value="ECO:0007669"/>
    <property type="project" value="UniProtKB-UniRule"/>
</dbReference>
<dbReference type="Gene3D" id="1.10.4190.10">
    <property type="entry name" value="Urease accessory protein UreF"/>
    <property type="match status" value="1"/>
</dbReference>
<dbReference type="HAMAP" id="MF_01385">
    <property type="entry name" value="UreF"/>
    <property type="match status" value="1"/>
</dbReference>
<dbReference type="InterPro" id="IPR002639">
    <property type="entry name" value="UreF"/>
</dbReference>
<dbReference type="InterPro" id="IPR038277">
    <property type="entry name" value="UreF_sf"/>
</dbReference>
<dbReference type="PANTHER" id="PTHR33620">
    <property type="entry name" value="UREASE ACCESSORY PROTEIN F"/>
    <property type="match status" value="1"/>
</dbReference>
<dbReference type="PANTHER" id="PTHR33620:SF1">
    <property type="entry name" value="UREASE ACCESSORY PROTEIN F"/>
    <property type="match status" value="1"/>
</dbReference>
<dbReference type="Pfam" id="PF01730">
    <property type="entry name" value="UreF"/>
    <property type="match status" value="1"/>
</dbReference>
<dbReference type="PIRSF" id="PIRSF009467">
    <property type="entry name" value="Ureas_acces_UreF"/>
    <property type="match status" value="1"/>
</dbReference>
<sequence>MSTEPEASAQPLPAQQSAALFRLMTWLSPAFPVGAFSYSSGIEWAVEAGDVEGAASLRDWLDAMLQHGAGFCDAVLLCHAYRATERHDDAGLLAVAELAAALVTSAERQLETLSQGRAFIEIARKAWNSDGLGRAVAACGEAIAYPVAVGVVSASHGVPLPATLHGFLHAVTSNWISAGARLIPLGQTDSQRVLAALEPSVIATGTRALTASLDDLGTATFRADLASLRHETQYTRLFRS</sequence>
<gene>
    <name evidence="1" type="primary">ureF</name>
    <name type="ordered locus">Rpal_4179</name>
</gene>
<protein>
    <recommendedName>
        <fullName evidence="1">Urease accessory protein UreF</fullName>
    </recommendedName>
</protein>
<accession>B3QGJ8</accession>
<feature type="chain" id="PRO_1000145139" description="Urease accessory protein UreF">
    <location>
        <begin position="1"/>
        <end position="240"/>
    </location>
</feature>
<keyword id="KW-0143">Chaperone</keyword>
<keyword id="KW-0963">Cytoplasm</keyword>
<keyword id="KW-0996">Nickel insertion</keyword>
<evidence type="ECO:0000255" key="1">
    <source>
        <dbReference type="HAMAP-Rule" id="MF_01385"/>
    </source>
</evidence>
<reference key="1">
    <citation type="submission" date="2008-05" db="EMBL/GenBank/DDBJ databases">
        <title>Complete sequence of Rhodopseudomonas palustris TIE-1.</title>
        <authorList>
            <consortium name="US DOE Joint Genome Institute"/>
            <person name="Lucas S."/>
            <person name="Copeland A."/>
            <person name="Lapidus A."/>
            <person name="Glavina del Rio T."/>
            <person name="Dalin E."/>
            <person name="Tice H."/>
            <person name="Pitluck S."/>
            <person name="Chain P."/>
            <person name="Malfatti S."/>
            <person name="Shin M."/>
            <person name="Vergez L."/>
            <person name="Lang D."/>
            <person name="Schmutz J."/>
            <person name="Larimer F."/>
            <person name="Land M."/>
            <person name="Hauser L."/>
            <person name="Kyrpides N."/>
            <person name="Mikhailova N."/>
            <person name="Emerson D."/>
            <person name="Newman D.K."/>
            <person name="Roden E."/>
            <person name="Richardson P."/>
        </authorList>
    </citation>
    <scope>NUCLEOTIDE SEQUENCE [LARGE SCALE GENOMIC DNA]</scope>
    <source>
        <strain>TIE-1</strain>
    </source>
</reference>
<name>UREF_RHOPT</name>
<comment type="function">
    <text evidence="1">Required for maturation of urease via the functional incorporation of the urease nickel metallocenter.</text>
</comment>
<comment type="subunit">
    <text evidence="1">UreD, UreF and UreG form a complex that acts as a GTP-hydrolysis-dependent molecular chaperone, activating the urease apoprotein by helping to assemble the nickel containing metallocenter of UreC. The UreE protein probably delivers the nickel.</text>
</comment>
<comment type="subcellular location">
    <subcellularLocation>
        <location evidence="1">Cytoplasm</location>
    </subcellularLocation>
</comment>
<comment type="similarity">
    <text evidence="1">Belongs to the UreF family.</text>
</comment>
<proteinExistence type="inferred from homology"/>
<organism>
    <name type="scientific">Rhodopseudomonas palustris (strain TIE-1)</name>
    <dbReference type="NCBI Taxonomy" id="395960"/>
    <lineage>
        <taxon>Bacteria</taxon>
        <taxon>Pseudomonadati</taxon>
        <taxon>Pseudomonadota</taxon>
        <taxon>Alphaproteobacteria</taxon>
        <taxon>Hyphomicrobiales</taxon>
        <taxon>Nitrobacteraceae</taxon>
        <taxon>Rhodopseudomonas</taxon>
    </lineage>
</organism>